<gene>
    <name evidence="1" type="primary">rpsO</name>
    <name type="ordered locus">BCG9842_B1338</name>
</gene>
<organism>
    <name type="scientific">Bacillus cereus (strain G9842)</name>
    <dbReference type="NCBI Taxonomy" id="405531"/>
    <lineage>
        <taxon>Bacteria</taxon>
        <taxon>Bacillati</taxon>
        <taxon>Bacillota</taxon>
        <taxon>Bacilli</taxon>
        <taxon>Bacillales</taxon>
        <taxon>Bacillaceae</taxon>
        <taxon>Bacillus</taxon>
        <taxon>Bacillus cereus group</taxon>
    </lineage>
</organism>
<keyword id="KW-0687">Ribonucleoprotein</keyword>
<keyword id="KW-0689">Ribosomal protein</keyword>
<keyword id="KW-0694">RNA-binding</keyword>
<keyword id="KW-0699">rRNA-binding</keyword>
<feature type="chain" id="PRO_1000143074" description="Small ribosomal subunit protein uS15">
    <location>
        <begin position="1"/>
        <end position="89"/>
    </location>
</feature>
<dbReference type="EMBL" id="CP001186">
    <property type="protein sequence ID" value="ACK95065.1"/>
    <property type="molecule type" value="Genomic_DNA"/>
</dbReference>
<dbReference type="RefSeq" id="WP_001229392.1">
    <property type="nucleotide sequence ID" value="NC_011772.1"/>
</dbReference>
<dbReference type="SMR" id="B7IUG6"/>
<dbReference type="GeneID" id="93007304"/>
<dbReference type="KEGG" id="bcg:BCG9842_B1338"/>
<dbReference type="HOGENOM" id="CLU_148518_0_0_9"/>
<dbReference type="Proteomes" id="UP000006744">
    <property type="component" value="Chromosome"/>
</dbReference>
<dbReference type="GO" id="GO:0022627">
    <property type="term" value="C:cytosolic small ribosomal subunit"/>
    <property type="evidence" value="ECO:0007669"/>
    <property type="project" value="TreeGrafter"/>
</dbReference>
<dbReference type="GO" id="GO:0019843">
    <property type="term" value="F:rRNA binding"/>
    <property type="evidence" value="ECO:0007669"/>
    <property type="project" value="UniProtKB-UniRule"/>
</dbReference>
<dbReference type="GO" id="GO:0003735">
    <property type="term" value="F:structural constituent of ribosome"/>
    <property type="evidence" value="ECO:0007669"/>
    <property type="project" value="InterPro"/>
</dbReference>
<dbReference type="GO" id="GO:0006412">
    <property type="term" value="P:translation"/>
    <property type="evidence" value="ECO:0007669"/>
    <property type="project" value="UniProtKB-UniRule"/>
</dbReference>
<dbReference type="CDD" id="cd00353">
    <property type="entry name" value="Ribosomal_S15p_S13e"/>
    <property type="match status" value="1"/>
</dbReference>
<dbReference type="FunFam" id="1.10.287.10:FF:000002">
    <property type="entry name" value="30S ribosomal protein S15"/>
    <property type="match status" value="1"/>
</dbReference>
<dbReference type="Gene3D" id="6.10.250.3130">
    <property type="match status" value="1"/>
</dbReference>
<dbReference type="Gene3D" id="1.10.287.10">
    <property type="entry name" value="S15/NS1, RNA-binding"/>
    <property type="match status" value="1"/>
</dbReference>
<dbReference type="HAMAP" id="MF_01343_B">
    <property type="entry name" value="Ribosomal_uS15_B"/>
    <property type="match status" value="1"/>
</dbReference>
<dbReference type="InterPro" id="IPR000589">
    <property type="entry name" value="Ribosomal_uS15"/>
</dbReference>
<dbReference type="InterPro" id="IPR005290">
    <property type="entry name" value="Ribosomal_uS15_bac-type"/>
</dbReference>
<dbReference type="InterPro" id="IPR009068">
    <property type="entry name" value="uS15_NS1_RNA-bd_sf"/>
</dbReference>
<dbReference type="NCBIfam" id="TIGR00952">
    <property type="entry name" value="S15_bact"/>
    <property type="match status" value="1"/>
</dbReference>
<dbReference type="PANTHER" id="PTHR23321">
    <property type="entry name" value="RIBOSOMAL PROTEIN S15, BACTERIAL AND ORGANELLAR"/>
    <property type="match status" value="1"/>
</dbReference>
<dbReference type="PANTHER" id="PTHR23321:SF26">
    <property type="entry name" value="SMALL RIBOSOMAL SUBUNIT PROTEIN US15M"/>
    <property type="match status" value="1"/>
</dbReference>
<dbReference type="Pfam" id="PF00312">
    <property type="entry name" value="Ribosomal_S15"/>
    <property type="match status" value="1"/>
</dbReference>
<dbReference type="SMART" id="SM01387">
    <property type="entry name" value="Ribosomal_S15"/>
    <property type="match status" value="1"/>
</dbReference>
<dbReference type="SUPFAM" id="SSF47060">
    <property type="entry name" value="S15/NS1 RNA-binding domain"/>
    <property type="match status" value="1"/>
</dbReference>
<dbReference type="PROSITE" id="PS00362">
    <property type="entry name" value="RIBOSOMAL_S15"/>
    <property type="match status" value="1"/>
</dbReference>
<evidence type="ECO:0000255" key="1">
    <source>
        <dbReference type="HAMAP-Rule" id="MF_01343"/>
    </source>
</evidence>
<evidence type="ECO:0000305" key="2"/>
<comment type="function">
    <text evidence="1">One of the primary rRNA binding proteins, it binds directly to 16S rRNA where it helps nucleate assembly of the platform of the 30S subunit by binding and bridging several RNA helices of the 16S rRNA.</text>
</comment>
<comment type="function">
    <text evidence="1">Forms an intersubunit bridge (bridge B4) with the 23S rRNA of the 50S subunit in the ribosome.</text>
</comment>
<comment type="subunit">
    <text evidence="1">Part of the 30S ribosomal subunit. Forms a bridge to the 50S subunit in the 70S ribosome, contacting the 23S rRNA.</text>
</comment>
<comment type="similarity">
    <text evidence="1">Belongs to the universal ribosomal protein uS15 family.</text>
</comment>
<name>RS15_BACC2</name>
<sequence length="89" mass="10560">MALTQERKNEIIAQFRTHETDTGSPEVQIAVLTEQINTLNEHLRTHKKDHHSRRGLLKMVGKRRNLLTYLRNSDITRYRELITKLGLRR</sequence>
<reference key="1">
    <citation type="submission" date="2008-10" db="EMBL/GenBank/DDBJ databases">
        <title>Genome sequence of Bacillus cereus G9842.</title>
        <authorList>
            <person name="Dodson R.J."/>
            <person name="Durkin A.S."/>
            <person name="Rosovitz M.J."/>
            <person name="Rasko D.A."/>
            <person name="Hoffmaster A."/>
            <person name="Ravel J."/>
            <person name="Sutton G."/>
        </authorList>
    </citation>
    <scope>NUCLEOTIDE SEQUENCE [LARGE SCALE GENOMIC DNA]</scope>
    <source>
        <strain>G9842</strain>
    </source>
</reference>
<accession>B7IUG6</accession>
<proteinExistence type="inferred from homology"/>
<protein>
    <recommendedName>
        <fullName evidence="1">Small ribosomal subunit protein uS15</fullName>
    </recommendedName>
    <alternativeName>
        <fullName evidence="2">30S ribosomal protein S15</fullName>
    </alternativeName>
</protein>